<accession>Q8U1C1</accession>
<feature type="chain" id="PRO_0000053419" description="UPF0248 protein PF1300">
    <location>
        <begin position="1"/>
        <end position="84"/>
    </location>
</feature>
<name>Y1300_PYRFU</name>
<evidence type="ECO:0000255" key="1">
    <source>
        <dbReference type="HAMAP-Rule" id="MF_01245"/>
    </source>
</evidence>
<gene>
    <name type="ordered locus">PF1300</name>
</gene>
<comment type="similarity">
    <text evidence="1">Belongs to the UPF0248 family.</text>
</comment>
<keyword id="KW-1185">Reference proteome</keyword>
<organism>
    <name type="scientific">Pyrococcus furiosus (strain ATCC 43587 / DSM 3638 / JCM 8422 / Vc1)</name>
    <dbReference type="NCBI Taxonomy" id="186497"/>
    <lineage>
        <taxon>Archaea</taxon>
        <taxon>Methanobacteriati</taxon>
        <taxon>Methanobacteriota</taxon>
        <taxon>Thermococci</taxon>
        <taxon>Thermococcales</taxon>
        <taxon>Thermococcaceae</taxon>
        <taxon>Pyrococcus</taxon>
    </lineage>
</organism>
<reference key="1">
    <citation type="journal article" date="1999" name="Genetics">
        <title>Divergence of the hyperthermophilic archaea Pyrococcus furiosus and P. horikoshii inferred from complete genomic sequences.</title>
        <authorList>
            <person name="Maeder D.L."/>
            <person name="Weiss R.B."/>
            <person name="Dunn D.M."/>
            <person name="Cherry J.L."/>
            <person name="Gonzalez J.M."/>
            <person name="DiRuggiero J."/>
            <person name="Robb F.T."/>
        </authorList>
    </citation>
    <scope>NUCLEOTIDE SEQUENCE [LARGE SCALE GENOMIC DNA]</scope>
    <source>
        <strain>ATCC 43587 / DSM 3638 / JCM 8422 / Vc1</strain>
    </source>
</reference>
<proteinExistence type="inferred from homology"/>
<dbReference type="EMBL" id="AE009950">
    <property type="protein sequence ID" value="AAL81424.1"/>
    <property type="molecule type" value="Genomic_DNA"/>
</dbReference>
<dbReference type="RefSeq" id="WP_011012444.1">
    <property type="nucleotide sequence ID" value="NZ_CP023154.1"/>
</dbReference>
<dbReference type="STRING" id="186497.PF1300"/>
<dbReference type="PaxDb" id="186497-PF1300"/>
<dbReference type="KEGG" id="pfu:PF1300"/>
<dbReference type="PATRIC" id="fig|186497.12.peg.1363"/>
<dbReference type="eggNOG" id="arCOG01302">
    <property type="taxonomic scope" value="Archaea"/>
</dbReference>
<dbReference type="HOGENOM" id="CLU_172276_3_1_2"/>
<dbReference type="OrthoDB" id="14794at2157"/>
<dbReference type="PhylomeDB" id="Q8U1C1"/>
<dbReference type="Proteomes" id="UP000001013">
    <property type="component" value="Chromosome"/>
</dbReference>
<dbReference type="HAMAP" id="MF_01245">
    <property type="entry name" value="UPF0248"/>
    <property type="match status" value="1"/>
</dbReference>
<dbReference type="InterPro" id="IPR040459">
    <property type="entry name" value="MJ1316"/>
</dbReference>
<dbReference type="InterPro" id="IPR007547">
    <property type="entry name" value="UPF0248"/>
</dbReference>
<dbReference type="NCBIfam" id="NF003272">
    <property type="entry name" value="PRK04257.1"/>
    <property type="match status" value="1"/>
</dbReference>
<dbReference type="Pfam" id="PF04457">
    <property type="entry name" value="MJ1316"/>
    <property type="match status" value="1"/>
</dbReference>
<protein>
    <recommendedName>
        <fullName evidence="1">UPF0248 protein PF1300</fullName>
    </recommendedName>
</protein>
<sequence length="84" mass="9930">MRKGSVKEVLAKIKYDPRENEEDYFIIIEHRGSYGNVRKIPVSLIELGHGYFFVGETQIPYHRILKVVRKDGRVVWESRKRGLK</sequence>